<reference key="1">
    <citation type="journal article" date="1998" name="Mol. Cell. Neurosci.">
        <title>Neural membrane protein 35 (NMP35): a novel member of a gene family which is highly expressed in the adult nervous system.</title>
        <authorList>
            <person name="Schweitzer B."/>
            <person name="Taylor V."/>
            <person name="Welcher A.A."/>
            <person name="McClelland M."/>
            <person name="Suter U."/>
        </authorList>
    </citation>
    <scope>NUCLEOTIDE SEQUENCE [MRNA]</scope>
    <scope>DEVELOPMENTAL STAGE</scope>
    <source>
        <strain>Sprague-Dawley</strain>
        <tissue>Brain</tissue>
    </source>
</reference>
<reference key="2">
    <citation type="journal article" date="2004" name="Genome Res.">
        <title>The status, quality, and expansion of the NIH full-length cDNA project: the Mammalian Gene Collection (MGC).</title>
        <authorList>
            <consortium name="The MGC Project Team"/>
        </authorList>
    </citation>
    <scope>NUCLEOTIDE SEQUENCE [LARGE SCALE MRNA]</scope>
    <source>
        <tissue>Brain</tissue>
    </source>
</reference>
<reference key="3">
    <citation type="journal article" date="2002" name="Brain Res. Mol. Brain Res.">
        <title>Neural membrane protein 35/Lifeguard is localized at postsynaptic sites and in dendrites.</title>
        <authorList>
            <person name="Schweitzer B."/>
            <person name="Suter U."/>
            <person name="Taylor V."/>
        </authorList>
    </citation>
    <scope>SUBCELLULAR LOCATION</scope>
    <scope>TISSUE SPECIFICITY</scope>
</reference>
<proteinExistence type="evidence at transcript level"/>
<sequence length="316" mass="35036">MTQGKLSVANKAPGTEGQQQANGEKKDAPAVPSAPPSYEEATSGEGLKAGAFPQGPTAVPLHPSWAYVDPSSSSGYEGGFPAGHHELFSTFSWDDQKVRQLFIRKVYTILLVQLLVTLAVVALFTFCDVVKDYVQANPGWYWASYAVFFATYLTLACCSGPRRHFPWNLILLTIFTLSMAYLTGMLSSYYNTTSVLLCLGITALVCLSVTIFSFQTKFDFTSCHGVLFVLLMTLFFSGLLLAILLPFQYVPWLHAVYAVLGAGVFTLFLAFDTQLLMGNRRHSLSPEEYIFGALNIYLDIIYIFTFFLQLFGTNRE</sequence>
<gene>
    <name type="primary">Faim2</name>
    <name type="synonym">Lfg</name>
    <name type="synonym">Lfg2</name>
    <name type="synonym">Nmp35</name>
</gene>
<accession>O88407</accession>
<organism>
    <name type="scientific">Rattus norvegicus</name>
    <name type="common">Rat</name>
    <dbReference type="NCBI Taxonomy" id="10116"/>
    <lineage>
        <taxon>Eukaryota</taxon>
        <taxon>Metazoa</taxon>
        <taxon>Chordata</taxon>
        <taxon>Craniata</taxon>
        <taxon>Vertebrata</taxon>
        <taxon>Euteleostomi</taxon>
        <taxon>Mammalia</taxon>
        <taxon>Eutheria</taxon>
        <taxon>Euarchontoglires</taxon>
        <taxon>Glires</taxon>
        <taxon>Rodentia</taxon>
        <taxon>Myomorpha</taxon>
        <taxon>Muroidea</taxon>
        <taxon>Muridae</taxon>
        <taxon>Murinae</taxon>
        <taxon>Rattus</taxon>
    </lineage>
</organism>
<protein>
    <recommendedName>
        <fullName>Protein lifeguard 2</fullName>
    </recommendedName>
    <alternativeName>
        <fullName>Fas apoptotic inhibitory molecule 2</fullName>
    </alternativeName>
    <alternativeName>
        <fullName>Neural membrane protein 35</fullName>
    </alternativeName>
</protein>
<dbReference type="EMBL" id="AF044201">
    <property type="protein sequence ID" value="AAC32463.1"/>
    <property type="molecule type" value="mRNA"/>
</dbReference>
<dbReference type="EMBL" id="BC087606">
    <property type="protein sequence ID" value="AAH87606.1"/>
    <property type="molecule type" value="mRNA"/>
</dbReference>
<dbReference type="RefSeq" id="NP_653357.1">
    <property type="nucleotide sequence ID" value="NM_144756.2"/>
</dbReference>
<dbReference type="SMR" id="O88407"/>
<dbReference type="BioGRID" id="251568">
    <property type="interactions" value="1"/>
</dbReference>
<dbReference type="FunCoup" id="O88407">
    <property type="interactions" value="328"/>
</dbReference>
<dbReference type="STRING" id="10116.ENSRNOP00000075485"/>
<dbReference type="GlyCosmos" id="O88407">
    <property type="glycosylation" value="1 site, No reported glycans"/>
</dbReference>
<dbReference type="GlyGen" id="O88407">
    <property type="glycosylation" value="1 site"/>
</dbReference>
<dbReference type="iPTMnet" id="O88407"/>
<dbReference type="PhosphoSitePlus" id="O88407"/>
<dbReference type="PaxDb" id="10116-ENSRNOP00000039775"/>
<dbReference type="Ensembl" id="ENSRNOT00000072309.3">
    <property type="protein sequence ID" value="ENSRNOP00000064487.3"/>
    <property type="gene ID" value="ENSRNOG00000045554.3"/>
</dbReference>
<dbReference type="GeneID" id="246274"/>
<dbReference type="KEGG" id="rno:246274"/>
<dbReference type="UCSC" id="RGD:628744">
    <property type="organism name" value="rat"/>
</dbReference>
<dbReference type="AGR" id="RGD:628744"/>
<dbReference type="CTD" id="23017"/>
<dbReference type="RGD" id="628744">
    <property type="gene designation" value="Faim2"/>
</dbReference>
<dbReference type="eggNOG" id="KOG2322">
    <property type="taxonomic scope" value="Eukaryota"/>
</dbReference>
<dbReference type="GeneTree" id="ENSGT01050000244890"/>
<dbReference type="HOGENOM" id="CLU_058671_3_2_1"/>
<dbReference type="InParanoid" id="O88407"/>
<dbReference type="OMA" id="FTGWYVY"/>
<dbReference type="OrthoDB" id="7933078at2759"/>
<dbReference type="PhylomeDB" id="O88407"/>
<dbReference type="TreeFam" id="TF319996"/>
<dbReference type="PRO" id="PR:O88407"/>
<dbReference type="Proteomes" id="UP000002494">
    <property type="component" value="Chromosome 7"/>
</dbReference>
<dbReference type="Bgee" id="ENSRNOG00000053258">
    <property type="expression patterns" value="Expressed in frontal cortex and 7 other cell types or tissues"/>
</dbReference>
<dbReference type="GO" id="GO:0005783">
    <property type="term" value="C:endoplasmic reticulum"/>
    <property type="evidence" value="ECO:0000266"/>
    <property type="project" value="RGD"/>
</dbReference>
<dbReference type="GO" id="GO:0005794">
    <property type="term" value="C:Golgi apparatus"/>
    <property type="evidence" value="ECO:0000266"/>
    <property type="project" value="RGD"/>
</dbReference>
<dbReference type="GO" id="GO:0000139">
    <property type="term" value="C:Golgi membrane"/>
    <property type="evidence" value="ECO:0000266"/>
    <property type="project" value="RGD"/>
</dbReference>
<dbReference type="GO" id="GO:0016020">
    <property type="term" value="C:membrane"/>
    <property type="evidence" value="ECO:0000266"/>
    <property type="project" value="RGD"/>
</dbReference>
<dbReference type="GO" id="GO:0045121">
    <property type="term" value="C:membrane raft"/>
    <property type="evidence" value="ECO:0000250"/>
    <property type="project" value="UniProtKB"/>
</dbReference>
<dbReference type="GO" id="GO:0045211">
    <property type="term" value="C:postsynaptic membrane"/>
    <property type="evidence" value="ECO:0007669"/>
    <property type="project" value="UniProtKB-SubCell"/>
</dbReference>
<dbReference type="GO" id="GO:0005262">
    <property type="term" value="F:calcium channel activity"/>
    <property type="evidence" value="ECO:0000318"/>
    <property type="project" value="GO_Central"/>
</dbReference>
<dbReference type="GO" id="GO:0097190">
    <property type="term" value="P:apoptotic signaling pathway"/>
    <property type="evidence" value="ECO:0000266"/>
    <property type="project" value="RGD"/>
</dbReference>
<dbReference type="GO" id="GO:0021681">
    <property type="term" value="P:cerebellar granular layer development"/>
    <property type="evidence" value="ECO:0000250"/>
    <property type="project" value="UniProtKB"/>
</dbReference>
<dbReference type="GO" id="GO:0021702">
    <property type="term" value="P:cerebellar Purkinje cell differentiation"/>
    <property type="evidence" value="ECO:0000250"/>
    <property type="project" value="UniProtKB"/>
</dbReference>
<dbReference type="GO" id="GO:0021680">
    <property type="term" value="P:cerebellar Purkinje cell layer development"/>
    <property type="evidence" value="ECO:0000250"/>
    <property type="project" value="UniProtKB"/>
</dbReference>
<dbReference type="GO" id="GO:0021549">
    <property type="term" value="P:cerebellum development"/>
    <property type="evidence" value="ECO:0000250"/>
    <property type="project" value="UniProtKB"/>
</dbReference>
<dbReference type="GO" id="GO:2001234">
    <property type="term" value="P:negative regulation of apoptotic signaling pathway"/>
    <property type="evidence" value="ECO:0000266"/>
    <property type="project" value="RGD"/>
</dbReference>
<dbReference type="GO" id="GO:1902042">
    <property type="term" value="P:negative regulation of extrinsic apoptotic signaling pathway via death domain receptors"/>
    <property type="evidence" value="ECO:0000266"/>
    <property type="project" value="RGD"/>
</dbReference>
<dbReference type="GO" id="GO:0043524">
    <property type="term" value="P:negative regulation of neuron apoptotic process"/>
    <property type="evidence" value="ECO:0000266"/>
    <property type="project" value="RGD"/>
</dbReference>
<dbReference type="GO" id="GO:0051402">
    <property type="term" value="P:neuron apoptotic process"/>
    <property type="evidence" value="ECO:0000266"/>
    <property type="project" value="RGD"/>
</dbReference>
<dbReference type="GO" id="GO:0043523">
    <property type="term" value="P:regulation of neuron apoptotic process"/>
    <property type="evidence" value="ECO:0000250"/>
    <property type="project" value="UniProtKB"/>
</dbReference>
<dbReference type="GO" id="GO:0002931">
    <property type="term" value="P:response to ischemia"/>
    <property type="evidence" value="ECO:0000266"/>
    <property type="project" value="RGD"/>
</dbReference>
<dbReference type="CDD" id="cd10428">
    <property type="entry name" value="LFG_like"/>
    <property type="match status" value="1"/>
</dbReference>
<dbReference type="InterPro" id="IPR006214">
    <property type="entry name" value="Bax_inhibitor_1-related"/>
</dbReference>
<dbReference type="PANTHER" id="PTHR23291">
    <property type="entry name" value="BAX INHIBITOR-RELATED"/>
    <property type="match status" value="1"/>
</dbReference>
<dbReference type="PANTHER" id="PTHR23291:SF18">
    <property type="entry name" value="PROTEIN LIFEGUARD 2"/>
    <property type="match status" value="1"/>
</dbReference>
<dbReference type="Pfam" id="PF01027">
    <property type="entry name" value="Bax1-I"/>
    <property type="match status" value="1"/>
</dbReference>
<name>LFG2_RAT</name>
<feature type="chain" id="PRO_0000179089" description="Protein lifeguard 2">
    <location>
        <begin position="1"/>
        <end position="316"/>
    </location>
</feature>
<feature type="transmembrane region" description="Helical" evidence="2">
    <location>
        <begin position="106"/>
        <end position="126"/>
    </location>
</feature>
<feature type="transmembrane region" description="Helical" evidence="2">
    <location>
        <begin position="138"/>
        <end position="158"/>
    </location>
</feature>
<feature type="transmembrane region" description="Helical" evidence="2">
    <location>
        <begin position="165"/>
        <end position="185"/>
    </location>
</feature>
<feature type="transmembrane region" description="Helical" evidence="2">
    <location>
        <begin position="194"/>
        <end position="214"/>
    </location>
</feature>
<feature type="transmembrane region" description="Helical" evidence="2">
    <location>
        <begin position="225"/>
        <end position="245"/>
    </location>
</feature>
<feature type="transmembrane region" description="Helical" evidence="2">
    <location>
        <begin position="251"/>
        <end position="271"/>
    </location>
</feature>
<feature type="transmembrane region" description="Helical" evidence="2">
    <location>
        <begin position="290"/>
        <end position="310"/>
    </location>
</feature>
<feature type="region of interest" description="Disordered" evidence="3">
    <location>
        <begin position="1"/>
        <end position="49"/>
    </location>
</feature>
<feature type="glycosylation site" description="N-linked (GlcNAc...) asparagine" evidence="2">
    <location>
        <position position="191"/>
    </location>
</feature>
<evidence type="ECO:0000250" key="1"/>
<evidence type="ECO:0000255" key="2"/>
<evidence type="ECO:0000256" key="3">
    <source>
        <dbReference type="SAM" id="MobiDB-lite"/>
    </source>
</evidence>
<evidence type="ECO:0000269" key="4">
    <source>
    </source>
</evidence>
<evidence type="ECO:0000269" key="5">
    <source>
    </source>
</evidence>
<evidence type="ECO:0000305" key="6"/>
<comment type="function">
    <text evidence="1">Antiapoptotic protein which protects cells uniquely from Fas-induced apoptosis. Regulates Fas-mediated apoptosis in neurons by interfering with caspase-8 activation. Plays a role in cerebellar development by affecting cerebellar size, internal granular layer (IGL) thickness, and Purkinje cell (PC) development (By similarity).</text>
</comment>
<comment type="subunit">
    <text evidence="1">Interacts with FAS/TNFRSF6 and BAX.</text>
</comment>
<comment type="subcellular location">
    <subcellularLocation>
        <location evidence="4">Cell membrane</location>
        <topology evidence="4">Multi-pass membrane protein</topology>
    </subcellularLocation>
    <subcellularLocation>
        <location evidence="1">Membrane raft</location>
    </subcellularLocation>
    <subcellularLocation>
        <location evidence="4">Postsynaptic cell membrane</location>
    </subcellularLocation>
</comment>
<comment type="tissue specificity">
    <text evidence="4">Expressed at high levels on dendrites and to a lesser extent on the soma and axons of neurons in various regions of brain.</text>
</comment>
<comment type="developmental stage">
    <text evidence="5">Low expression was detected in brain and spinal cord at birth, increasing with age to highest levels in postnatal days 60 (P60).</text>
</comment>
<comment type="similarity">
    <text evidence="6">Belongs to the BI1 family. LFG subfamily.</text>
</comment>
<keyword id="KW-0053">Apoptosis</keyword>
<keyword id="KW-1003">Cell membrane</keyword>
<keyword id="KW-0325">Glycoprotein</keyword>
<keyword id="KW-0472">Membrane</keyword>
<keyword id="KW-0628">Postsynaptic cell membrane</keyword>
<keyword id="KW-1185">Reference proteome</keyword>
<keyword id="KW-0770">Synapse</keyword>
<keyword id="KW-0812">Transmembrane</keyword>
<keyword id="KW-1133">Transmembrane helix</keyword>